<keyword id="KW-0539">Nucleus</keyword>
<keyword id="KW-1185">Reference proteome</keyword>
<keyword id="KW-0687">Ribonucleoprotein</keyword>
<keyword id="KW-0690">Ribosome biogenesis</keyword>
<keyword id="KW-0698">rRNA processing</keyword>
<sequence>MSKIRAGPKSGRKQLREITRAGQKRVRYDDEATVADLTPDNESDSDNAEPSVAAEREDVEQHRGQAYNALLTLLKSEHPERKHKSNKKIKKDSQRAEEDSPENDGINSEDEQQNIENALDDVSGGVVDEEDMEDSLSDVDESEDESDPFESHFSKYSESRLYAFDKGFKDKTVKYKSSKTDVSEEESLIYSKPCLDDEEVLPVKGKQTLSSYFIKQKLKLANDFQNNGLPLTEIQKELVDPMFQYKDMLYEYDDYADEDQYRDLYSLHALNHVYKTRDRILKNNQKLQENNDEELLDQGFTRPKVLIVVPTRDAAHKIVRKIMEKSGLDQFDKKSKFEDQFFEDSLPPTSKPKSFQHIFQGNTNDFFVLGLKFTRKSLKIYSNFYQSDIIICSPLGIQLILENTDKKKRQDDFLSSIEVMIIDQLHSIEYQNAMHVTTIFQHINKIPEQQREADFSRIRMWYINEQAKFFRQTIVFTKYISPFANSILNGKCRNLAGRWKNHRKIKPEQSSIGQLGLKVRQIFQRFDLAGGTALDEPDYRFKFFTSVIVPSIVKSTGYEDGILLYIPDYTDFIRVRNYLKEKTTIIFGEINEYSNQKQLTSNRARFQHGKVKVLLYTERLHHFRRYEIKNVKSVIFYKPPGNPEFYSEVVRNIGKNVFLGNCDINISTVRCIYSKMDGLSLERVVGSKRAAVLAHGQNEVYEFK</sequence>
<dbReference type="EMBL" id="CR382125">
    <property type="protein sequence ID" value="CAG99408.1"/>
    <property type="molecule type" value="Genomic_DNA"/>
</dbReference>
<dbReference type="RefSeq" id="XP_454321.1">
    <property type="nucleotide sequence ID" value="XM_454321.1"/>
</dbReference>
<dbReference type="FunCoup" id="Q6CP18">
    <property type="interactions" value="1323"/>
</dbReference>
<dbReference type="STRING" id="284590.Q6CP18"/>
<dbReference type="PaxDb" id="284590-Q6CP18"/>
<dbReference type="KEGG" id="kla:KLLA0_E08229g"/>
<dbReference type="eggNOG" id="KOG2340">
    <property type="taxonomic scope" value="Eukaryota"/>
</dbReference>
<dbReference type="HOGENOM" id="CLU_018705_0_1_1"/>
<dbReference type="InParanoid" id="Q6CP18"/>
<dbReference type="OMA" id="QDRGDTF"/>
<dbReference type="Proteomes" id="UP000000598">
    <property type="component" value="Chromosome E"/>
</dbReference>
<dbReference type="GO" id="GO:0005730">
    <property type="term" value="C:nucleolus"/>
    <property type="evidence" value="ECO:0007669"/>
    <property type="project" value="UniProtKB-SubCell"/>
</dbReference>
<dbReference type="GO" id="GO:0032040">
    <property type="term" value="C:small-subunit processome"/>
    <property type="evidence" value="ECO:0007669"/>
    <property type="project" value="TreeGrafter"/>
</dbReference>
<dbReference type="GO" id="GO:0019843">
    <property type="term" value="F:rRNA binding"/>
    <property type="evidence" value="ECO:0007669"/>
    <property type="project" value="TreeGrafter"/>
</dbReference>
<dbReference type="GO" id="GO:0034511">
    <property type="term" value="F:U3 snoRNA binding"/>
    <property type="evidence" value="ECO:0007669"/>
    <property type="project" value="InterPro"/>
</dbReference>
<dbReference type="GO" id="GO:0000462">
    <property type="term" value="P:maturation of SSU-rRNA from tricistronic rRNA transcript (SSU-rRNA, 5.8S rRNA, LSU-rRNA)"/>
    <property type="evidence" value="ECO:0007669"/>
    <property type="project" value="TreeGrafter"/>
</dbReference>
<dbReference type="Gene3D" id="3.40.50.300">
    <property type="entry name" value="P-loop containing nucleotide triphosphate hydrolases"/>
    <property type="match status" value="1"/>
</dbReference>
<dbReference type="InterPro" id="IPR027417">
    <property type="entry name" value="P-loop_NTPase"/>
</dbReference>
<dbReference type="InterPro" id="IPR010678">
    <property type="entry name" value="UTP25"/>
</dbReference>
<dbReference type="InterPro" id="IPR053939">
    <property type="entry name" value="UTP25_C"/>
</dbReference>
<dbReference type="InterPro" id="IPR053940">
    <property type="entry name" value="UTP25_NTPase-like"/>
</dbReference>
<dbReference type="PANTHER" id="PTHR12933">
    <property type="entry name" value="ORF PROTEIN-RELATED"/>
    <property type="match status" value="1"/>
</dbReference>
<dbReference type="PANTHER" id="PTHR12933:SF0">
    <property type="entry name" value="U3 SMALL NUCLEOLAR RNA-ASSOCIATED PROTEIN 25 HOMOLOG"/>
    <property type="match status" value="1"/>
</dbReference>
<dbReference type="Pfam" id="PF06862">
    <property type="entry name" value="Utp25_C"/>
    <property type="match status" value="1"/>
</dbReference>
<dbReference type="Pfam" id="PF22916">
    <property type="entry name" value="UTP25_NTPase-like"/>
    <property type="match status" value="1"/>
</dbReference>
<protein>
    <recommendedName>
        <fullName>U3 small nucleolar RNA-associated protein 25</fullName>
        <shortName>U3 snoRNA-associated protein 25</shortName>
    </recommendedName>
    <alternativeName>
        <fullName>U three protein 25</fullName>
    </alternativeName>
</protein>
<reference key="1">
    <citation type="journal article" date="2004" name="Nature">
        <title>Genome evolution in yeasts.</title>
        <authorList>
            <person name="Dujon B."/>
            <person name="Sherman D."/>
            <person name="Fischer G."/>
            <person name="Durrens P."/>
            <person name="Casaregola S."/>
            <person name="Lafontaine I."/>
            <person name="de Montigny J."/>
            <person name="Marck C."/>
            <person name="Neuveglise C."/>
            <person name="Talla E."/>
            <person name="Goffard N."/>
            <person name="Frangeul L."/>
            <person name="Aigle M."/>
            <person name="Anthouard V."/>
            <person name="Babour A."/>
            <person name="Barbe V."/>
            <person name="Barnay S."/>
            <person name="Blanchin S."/>
            <person name="Beckerich J.-M."/>
            <person name="Beyne E."/>
            <person name="Bleykasten C."/>
            <person name="Boisrame A."/>
            <person name="Boyer J."/>
            <person name="Cattolico L."/>
            <person name="Confanioleri F."/>
            <person name="de Daruvar A."/>
            <person name="Despons L."/>
            <person name="Fabre E."/>
            <person name="Fairhead C."/>
            <person name="Ferry-Dumazet H."/>
            <person name="Groppi A."/>
            <person name="Hantraye F."/>
            <person name="Hennequin C."/>
            <person name="Jauniaux N."/>
            <person name="Joyet P."/>
            <person name="Kachouri R."/>
            <person name="Kerrest A."/>
            <person name="Koszul R."/>
            <person name="Lemaire M."/>
            <person name="Lesur I."/>
            <person name="Ma L."/>
            <person name="Muller H."/>
            <person name="Nicaud J.-M."/>
            <person name="Nikolski M."/>
            <person name="Oztas S."/>
            <person name="Ozier-Kalogeropoulos O."/>
            <person name="Pellenz S."/>
            <person name="Potier S."/>
            <person name="Richard G.-F."/>
            <person name="Straub M.-L."/>
            <person name="Suleau A."/>
            <person name="Swennen D."/>
            <person name="Tekaia F."/>
            <person name="Wesolowski-Louvel M."/>
            <person name="Westhof E."/>
            <person name="Wirth B."/>
            <person name="Zeniou-Meyer M."/>
            <person name="Zivanovic Y."/>
            <person name="Bolotin-Fukuhara M."/>
            <person name="Thierry A."/>
            <person name="Bouchier C."/>
            <person name="Caudron B."/>
            <person name="Scarpelli C."/>
            <person name="Gaillardin C."/>
            <person name="Weissenbach J."/>
            <person name="Wincker P."/>
            <person name="Souciet J.-L."/>
        </authorList>
    </citation>
    <scope>NUCLEOTIDE SEQUENCE [LARGE SCALE GENOMIC DNA]</scope>
    <source>
        <strain>ATCC 8585 / CBS 2359 / DSM 70799 / NBRC 1267 / NRRL Y-1140 / WM37</strain>
    </source>
</reference>
<gene>
    <name type="primary">UTP25</name>
    <name type="ordered locus">KLLA0E08229g</name>
</gene>
<evidence type="ECO:0000250" key="1"/>
<evidence type="ECO:0000256" key="2">
    <source>
        <dbReference type="SAM" id="MobiDB-lite"/>
    </source>
</evidence>
<evidence type="ECO:0000305" key="3"/>
<comment type="function">
    <text evidence="1">DEAD-box RNA helicase-like protein required for pre-18S rRNA processing, specifically at sites A0, A1, and A2.</text>
</comment>
<comment type="subunit">
    <text evidence="1">Component of the ribosomal small subunit (SSU) processome composed of at least 40 protein subunits and snoRNA U3.</text>
</comment>
<comment type="subcellular location">
    <subcellularLocation>
        <location evidence="1">Nucleus</location>
        <location evidence="1">Nucleolus</location>
    </subcellularLocation>
</comment>
<comment type="similarity">
    <text evidence="3">Belongs to the UTP25 family.</text>
</comment>
<organism>
    <name type="scientific">Kluyveromyces lactis (strain ATCC 8585 / CBS 2359 / DSM 70799 / NBRC 1267 / NRRL Y-1140 / WM37)</name>
    <name type="common">Yeast</name>
    <name type="synonym">Candida sphaerica</name>
    <dbReference type="NCBI Taxonomy" id="284590"/>
    <lineage>
        <taxon>Eukaryota</taxon>
        <taxon>Fungi</taxon>
        <taxon>Dikarya</taxon>
        <taxon>Ascomycota</taxon>
        <taxon>Saccharomycotina</taxon>
        <taxon>Saccharomycetes</taxon>
        <taxon>Saccharomycetales</taxon>
        <taxon>Saccharomycetaceae</taxon>
        <taxon>Kluyveromyces</taxon>
    </lineage>
</organism>
<name>UTP25_KLULA</name>
<proteinExistence type="inferred from homology"/>
<feature type="chain" id="PRO_0000408118" description="U3 small nucleolar RNA-associated protein 25">
    <location>
        <begin position="1"/>
        <end position="704"/>
    </location>
</feature>
<feature type="region of interest" description="Disordered" evidence="2">
    <location>
        <begin position="1"/>
        <end position="152"/>
    </location>
</feature>
<feature type="compositionally biased region" description="Basic and acidic residues" evidence="2">
    <location>
        <begin position="54"/>
        <end position="63"/>
    </location>
</feature>
<feature type="compositionally biased region" description="Basic residues" evidence="2">
    <location>
        <begin position="81"/>
        <end position="90"/>
    </location>
</feature>
<feature type="compositionally biased region" description="Acidic residues" evidence="2">
    <location>
        <begin position="99"/>
        <end position="113"/>
    </location>
</feature>
<feature type="compositionally biased region" description="Acidic residues" evidence="2">
    <location>
        <begin position="127"/>
        <end position="148"/>
    </location>
</feature>
<accession>Q6CP18</accession>